<evidence type="ECO:0000250" key="1"/>
<evidence type="ECO:0000250" key="2">
    <source>
        <dbReference type="UniProtKB" id="O54972"/>
    </source>
</evidence>
<evidence type="ECO:0000250" key="3">
    <source>
        <dbReference type="UniProtKB" id="Q06455"/>
    </source>
</evidence>
<evidence type="ECO:0000255" key="4"/>
<evidence type="ECO:0000255" key="5">
    <source>
        <dbReference type="PROSITE-ProRule" id="PRU00134"/>
    </source>
</evidence>
<evidence type="ECO:0000255" key="6">
    <source>
        <dbReference type="PROSITE-ProRule" id="PRU00440"/>
    </source>
</evidence>
<evidence type="ECO:0000256" key="7">
    <source>
        <dbReference type="SAM" id="MobiDB-lite"/>
    </source>
</evidence>
<evidence type="ECO:0000269" key="8">
    <source>
    </source>
</evidence>
<evidence type="ECO:0000269" key="9">
    <source>
    </source>
</evidence>
<evidence type="ECO:0000269" key="10">
    <source>
    </source>
</evidence>
<evidence type="ECO:0000269" key="11">
    <source>
    </source>
</evidence>
<evidence type="ECO:0000269" key="12">
    <source>
    </source>
</evidence>
<evidence type="ECO:0000269" key="13">
    <source>
    </source>
</evidence>
<evidence type="ECO:0000269" key="14">
    <source>
    </source>
</evidence>
<evidence type="ECO:0000269" key="15">
    <source>
    </source>
</evidence>
<evidence type="ECO:0000269" key="16">
    <source>
    </source>
</evidence>
<evidence type="ECO:0000269" key="17">
    <source>
    </source>
</evidence>
<evidence type="ECO:0000269" key="18">
    <source>
    </source>
</evidence>
<evidence type="ECO:0000269" key="19">
    <source>
    </source>
</evidence>
<evidence type="ECO:0000269" key="20">
    <source>
    </source>
</evidence>
<evidence type="ECO:0000269" key="21">
    <source>
    </source>
</evidence>
<evidence type="ECO:0000269" key="22">
    <source>
    </source>
</evidence>
<evidence type="ECO:0000269" key="23">
    <source>
    </source>
</evidence>
<evidence type="ECO:0000269" key="24">
    <source>
    </source>
</evidence>
<evidence type="ECO:0000269" key="25">
    <source>
    </source>
</evidence>
<evidence type="ECO:0000269" key="26">
    <source>
    </source>
</evidence>
<evidence type="ECO:0000303" key="27">
    <source>
    </source>
</evidence>
<evidence type="ECO:0000303" key="28">
    <source>
    </source>
</evidence>
<evidence type="ECO:0000303" key="29">
    <source>
    </source>
</evidence>
<evidence type="ECO:0000305" key="30"/>
<evidence type="ECO:0007744" key="31">
    <source>
    </source>
</evidence>
<evidence type="ECO:0007744" key="32">
    <source>
    </source>
</evidence>
<dbReference type="EMBL" id="AB010419">
    <property type="protein sequence ID" value="BAA29061.1"/>
    <property type="molecule type" value="mRNA"/>
</dbReference>
<dbReference type="EMBL" id="AB010420">
    <property type="protein sequence ID" value="BAA29062.1"/>
    <property type="molecule type" value="mRNA"/>
</dbReference>
<dbReference type="EMBL" id="AB013286">
    <property type="protein sequence ID" value="BAA31276.1"/>
    <property type="status" value="ALT_SEQ"/>
    <property type="molecule type" value="Genomic_DNA"/>
</dbReference>
<dbReference type="EMBL" id="AB013286">
    <property type="protein sequence ID" value="BAA31277.1"/>
    <property type="status" value="ALT_SEQ"/>
    <property type="molecule type" value="Genomic_DNA"/>
</dbReference>
<dbReference type="EMBL" id="CH471184">
    <property type="protein sequence ID" value="EAW66748.1"/>
    <property type="molecule type" value="Genomic_DNA"/>
</dbReference>
<dbReference type="EMBL" id="CH471184">
    <property type="protein sequence ID" value="EAW66752.1"/>
    <property type="molecule type" value="Genomic_DNA"/>
</dbReference>
<dbReference type="EMBL" id="BC047019">
    <property type="protein sequence ID" value="AAH47019.1"/>
    <property type="molecule type" value="mRNA"/>
</dbReference>
<dbReference type="EMBL" id="BC062624">
    <property type="protein sequence ID" value="AAH62624.1"/>
    <property type="status" value="ALT_SEQ"/>
    <property type="molecule type" value="mRNA"/>
</dbReference>
<dbReference type="EMBL" id="AF052217">
    <property type="protein sequence ID" value="AAC64701.1"/>
    <property type="molecule type" value="Genomic_DNA"/>
</dbReference>
<dbReference type="EMBL" id="AF052216">
    <property type="protein sequence ID" value="AAC64701.1"/>
    <property type="status" value="JOINED"/>
    <property type="molecule type" value="Genomic_DNA"/>
</dbReference>
<dbReference type="EMBL" id="AF052215">
    <property type="protein sequence ID" value="AAC64702.1"/>
    <property type="molecule type" value="Genomic_DNA"/>
</dbReference>
<dbReference type="EMBL" id="AF052213">
    <property type="protein sequence ID" value="AAC64702.1"/>
    <property type="status" value="JOINED"/>
    <property type="molecule type" value="Genomic_DNA"/>
</dbReference>
<dbReference type="EMBL" id="AF052214">
    <property type="protein sequence ID" value="AAC64702.1"/>
    <property type="status" value="JOINED"/>
    <property type="molecule type" value="Genomic_DNA"/>
</dbReference>
<dbReference type="EMBL" id="AF052220">
    <property type="protein sequence ID" value="AAC64698.1"/>
    <property type="molecule type" value="mRNA"/>
</dbReference>
<dbReference type="CCDS" id="CCDS10972.1">
    <molecule id="O75081-1"/>
</dbReference>
<dbReference type="CCDS" id="CCDS10973.1">
    <molecule id="O75081-2"/>
</dbReference>
<dbReference type="RefSeq" id="NP_005178.4">
    <molecule id="O75081-1"/>
    <property type="nucleotide sequence ID" value="NM_005187.5"/>
</dbReference>
<dbReference type="RefSeq" id="NP_787127.1">
    <molecule id="O75081-2"/>
    <property type="nucleotide sequence ID" value="NM_175931.3"/>
</dbReference>
<dbReference type="PDB" id="9DE2">
    <property type="method" value="NMR"/>
    <property type="chains" value="A=551-597"/>
</dbReference>
<dbReference type="PDBsum" id="9DE2"/>
<dbReference type="BMRB" id="O75081"/>
<dbReference type="SMR" id="O75081"/>
<dbReference type="BioGRID" id="107311">
    <property type="interactions" value="84"/>
</dbReference>
<dbReference type="DIP" id="DIP-48898N"/>
<dbReference type="FunCoup" id="O75081">
    <property type="interactions" value="1555"/>
</dbReference>
<dbReference type="IntAct" id="O75081">
    <property type="interactions" value="45"/>
</dbReference>
<dbReference type="MINT" id="O75081"/>
<dbReference type="STRING" id="9606.ENSP00000268679"/>
<dbReference type="GlyGen" id="O75081">
    <property type="glycosylation" value="1 site"/>
</dbReference>
<dbReference type="iPTMnet" id="O75081"/>
<dbReference type="PhosphoSitePlus" id="O75081"/>
<dbReference type="BioMuta" id="CBFA2T3"/>
<dbReference type="MassIVE" id="O75081"/>
<dbReference type="PaxDb" id="9606-ENSP00000268679"/>
<dbReference type="PeptideAtlas" id="O75081"/>
<dbReference type="ProteomicsDB" id="49745">
    <molecule id="O75081-1"/>
</dbReference>
<dbReference type="ProteomicsDB" id="49746">
    <molecule id="O75081-2"/>
</dbReference>
<dbReference type="ProteomicsDB" id="49747">
    <molecule id="O75081-4"/>
</dbReference>
<dbReference type="ProteomicsDB" id="49748">
    <molecule id="O75081-5"/>
</dbReference>
<dbReference type="Pumba" id="O75081"/>
<dbReference type="Antibodypedia" id="30813">
    <property type="antibodies" value="129 antibodies from 27 providers"/>
</dbReference>
<dbReference type="DNASU" id="863"/>
<dbReference type="Ensembl" id="ENST00000268679.9">
    <molecule id="O75081-1"/>
    <property type="protein sequence ID" value="ENSP00000268679.4"/>
    <property type="gene ID" value="ENSG00000129993.15"/>
</dbReference>
<dbReference type="Ensembl" id="ENST00000327483.9">
    <molecule id="O75081-2"/>
    <property type="protein sequence ID" value="ENSP00000332122.5"/>
    <property type="gene ID" value="ENSG00000129993.15"/>
</dbReference>
<dbReference type="GeneID" id="863"/>
<dbReference type="KEGG" id="hsa:863"/>
<dbReference type="MANE-Select" id="ENST00000268679.9">
    <property type="protein sequence ID" value="ENSP00000268679.4"/>
    <property type="RefSeq nucleotide sequence ID" value="NM_005187.6"/>
    <property type="RefSeq protein sequence ID" value="NP_005178.4"/>
</dbReference>
<dbReference type="UCSC" id="uc002fml.3">
    <molecule id="O75081-1"/>
    <property type="organism name" value="human"/>
</dbReference>
<dbReference type="AGR" id="HGNC:1537"/>
<dbReference type="CTD" id="863"/>
<dbReference type="DisGeNET" id="863"/>
<dbReference type="GeneCards" id="CBFA2T3"/>
<dbReference type="HGNC" id="HGNC:1537">
    <property type="gene designation" value="CBFA2T3"/>
</dbReference>
<dbReference type="HPA" id="ENSG00000129993">
    <property type="expression patterns" value="Tissue enhanced (brain, lymphoid tissue)"/>
</dbReference>
<dbReference type="MalaCards" id="CBFA2T3"/>
<dbReference type="MIM" id="603870">
    <property type="type" value="gene"/>
</dbReference>
<dbReference type="neXtProt" id="NX_O75081"/>
<dbReference type="OpenTargets" id="ENSG00000129993"/>
<dbReference type="Orphanet" id="329469">
    <property type="disease" value="Acute megakaryoblastic leukemia in children without Down syndrome"/>
</dbReference>
<dbReference type="PharmGKB" id="PA26113"/>
<dbReference type="VEuPathDB" id="HostDB:ENSG00000129993"/>
<dbReference type="eggNOG" id="ENOG502QTD6">
    <property type="taxonomic scope" value="Eukaryota"/>
</dbReference>
<dbReference type="GeneTree" id="ENSGT00950000183176"/>
<dbReference type="HOGENOM" id="CLU_022077_2_0_1"/>
<dbReference type="InParanoid" id="O75081"/>
<dbReference type="OMA" id="KAYEMIT"/>
<dbReference type="OrthoDB" id="8872930at2759"/>
<dbReference type="PAN-GO" id="O75081">
    <property type="GO annotations" value="3 GO annotations based on evolutionary models"/>
</dbReference>
<dbReference type="PhylomeDB" id="O75081"/>
<dbReference type="TreeFam" id="TF106303"/>
<dbReference type="PathwayCommons" id="O75081"/>
<dbReference type="SignaLink" id="O75081"/>
<dbReference type="SIGNOR" id="O75081"/>
<dbReference type="BioGRID-ORCS" id="863">
    <property type="hits" value="29 hits in 1158 CRISPR screens"/>
</dbReference>
<dbReference type="ChiTaRS" id="CBFA2T3">
    <property type="organism name" value="human"/>
</dbReference>
<dbReference type="GeneWiki" id="CBFA2T3"/>
<dbReference type="GenomeRNAi" id="863"/>
<dbReference type="Pharos" id="O75081">
    <property type="development level" value="Tbio"/>
</dbReference>
<dbReference type="PRO" id="PR:O75081"/>
<dbReference type="Proteomes" id="UP000005640">
    <property type="component" value="Chromosome 16"/>
</dbReference>
<dbReference type="RNAct" id="O75081">
    <property type="molecule type" value="protein"/>
</dbReference>
<dbReference type="Bgee" id="ENSG00000129993">
    <property type="expression patterns" value="Expressed in endometrium epithelium and 121 other cell types or tissues"/>
</dbReference>
<dbReference type="ExpressionAtlas" id="O75081">
    <property type="expression patterns" value="baseline and differential"/>
</dbReference>
<dbReference type="GO" id="GO:0000139">
    <property type="term" value="C:Golgi membrane"/>
    <property type="evidence" value="ECO:0007669"/>
    <property type="project" value="UniProtKB-SubCell"/>
</dbReference>
<dbReference type="GO" id="GO:0005730">
    <property type="term" value="C:nucleolus"/>
    <property type="evidence" value="ECO:0007669"/>
    <property type="project" value="UniProtKB-SubCell"/>
</dbReference>
<dbReference type="GO" id="GO:0005654">
    <property type="term" value="C:nucleoplasm"/>
    <property type="evidence" value="ECO:0000314"/>
    <property type="project" value="HPA"/>
</dbReference>
<dbReference type="GO" id="GO:0005634">
    <property type="term" value="C:nucleus"/>
    <property type="evidence" value="ECO:0000318"/>
    <property type="project" value="GO_Central"/>
</dbReference>
<dbReference type="GO" id="GO:0003714">
    <property type="term" value="F:transcription corepressor activity"/>
    <property type="evidence" value="ECO:0000318"/>
    <property type="project" value="GO_Central"/>
</dbReference>
<dbReference type="GO" id="GO:0008270">
    <property type="term" value="F:zinc ion binding"/>
    <property type="evidence" value="ECO:0007669"/>
    <property type="project" value="UniProtKB-KW"/>
</dbReference>
<dbReference type="GO" id="GO:0006351">
    <property type="term" value="P:DNA-templated transcription"/>
    <property type="evidence" value="ECO:0007669"/>
    <property type="project" value="InterPro"/>
</dbReference>
<dbReference type="GO" id="GO:0030851">
    <property type="term" value="P:granulocyte differentiation"/>
    <property type="evidence" value="ECO:0000314"/>
    <property type="project" value="MGI"/>
</dbReference>
<dbReference type="GO" id="GO:0008285">
    <property type="term" value="P:negative regulation of cell population proliferation"/>
    <property type="evidence" value="ECO:0000314"/>
    <property type="project" value="UniProtKB"/>
</dbReference>
<dbReference type="GO" id="GO:0045892">
    <property type="term" value="P:negative regulation of DNA-templated transcription"/>
    <property type="evidence" value="ECO:0000314"/>
    <property type="project" value="UniProtKB"/>
</dbReference>
<dbReference type="GO" id="GO:0045820">
    <property type="term" value="P:negative regulation of glycolytic process"/>
    <property type="evidence" value="ECO:0000314"/>
    <property type="project" value="UniProtKB"/>
</dbReference>
<dbReference type="GO" id="GO:0032436">
    <property type="term" value="P:positive regulation of proteasomal ubiquitin-dependent protein catabolic process"/>
    <property type="evidence" value="ECO:0000315"/>
    <property type="project" value="UniProtKB"/>
</dbReference>
<dbReference type="GO" id="GO:1903715">
    <property type="term" value="P:regulation of aerobic respiration"/>
    <property type="evidence" value="ECO:0000314"/>
    <property type="project" value="UniProtKB"/>
</dbReference>
<dbReference type="GO" id="GO:0001666">
    <property type="term" value="P:response to hypoxia"/>
    <property type="evidence" value="ECO:0000314"/>
    <property type="project" value="UniProtKB"/>
</dbReference>
<dbReference type="FunFam" id="6.10.140.2220:FF:000001">
    <property type="entry name" value="CBFA2/RUNX1 translocation partner 3"/>
    <property type="match status" value="1"/>
</dbReference>
<dbReference type="FunFam" id="1.20.120.1110:FF:000001">
    <property type="entry name" value="RUNX1 translocation partner 1"/>
    <property type="match status" value="1"/>
</dbReference>
<dbReference type="Gene3D" id="6.10.140.2220">
    <property type="match status" value="1"/>
</dbReference>
<dbReference type="Gene3D" id="6.10.250.230">
    <property type="match status" value="1"/>
</dbReference>
<dbReference type="Gene3D" id="1.20.120.1110">
    <property type="entry name" value="TAFH/NHR1 domain"/>
    <property type="match status" value="1"/>
</dbReference>
<dbReference type="InterPro" id="IPR013289">
    <property type="entry name" value="CBFA2T1/2/3"/>
</dbReference>
<dbReference type="InterPro" id="IPR013292">
    <property type="entry name" value="CBFA2T3"/>
</dbReference>
<dbReference type="InterPro" id="IPR014896">
    <property type="entry name" value="NHR2"/>
</dbReference>
<dbReference type="InterPro" id="IPR037249">
    <property type="entry name" value="TAFH/NHR1_dom_sf"/>
</dbReference>
<dbReference type="InterPro" id="IPR003894">
    <property type="entry name" value="TAFH_NHR1"/>
</dbReference>
<dbReference type="InterPro" id="IPR002893">
    <property type="entry name" value="Znf_MYND"/>
</dbReference>
<dbReference type="PANTHER" id="PTHR10379">
    <property type="entry name" value="MTG8 ETO EIGHT TWENTY ONE PROTEIN"/>
    <property type="match status" value="1"/>
</dbReference>
<dbReference type="PANTHER" id="PTHR10379:SF6">
    <property type="entry name" value="PROTEIN CBFA2T3"/>
    <property type="match status" value="1"/>
</dbReference>
<dbReference type="Pfam" id="PF08788">
    <property type="entry name" value="NHR2"/>
    <property type="match status" value="1"/>
</dbReference>
<dbReference type="Pfam" id="PF07531">
    <property type="entry name" value="TAFH"/>
    <property type="match status" value="1"/>
</dbReference>
<dbReference type="Pfam" id="PF01753">
    <property type="entry name" value="zf-MYND"/>
    <property type="match status" value="1"/>
</dbReference>
<dbReference type="PRINTS" id="PR01875">
    <property type="entry name" value="ETOFAMILY"/>
</dbReference>
<dbReference type="PRINTS" id="PR01878">
    <property type="entry name" value="MTG16PROTEIN"/>
</dbReference>
<dbReference type="SMART" id="SM00549">
    <property type="entry name" value="TAFH"/>
    <property type="match status" value="1"/>
</dbReference>
<dbReference type="SUPFAM" id="SSF144232">
    <property type="entry name" value="HIT/MYND zinc finger-like"/>
    <property type="match status" value="1"/>
</dbReference>
<dbReference type="SUPFAM" id="SSF158553">
    <property type="entry name" value="TAFH domain-like"/>
    <property type="match status" value="1"/>
</dbReference>
<dbReference type="PROSITE" id="PS51119">
    <property type="entry name" value="TAFH"/>
    <property type="match status" value="1"/>
</dbReference>
<dbReference type="PROSITE" id="PS01360">
    <property type="entry name" value="ZF_MYND_1"/>
    <property type="match status" value="1"/>
</dbReference>
<dbReference type="PROSITE" id="PS50865">
    <property type="entry name" value="ZF_MYND_2"/>
    <property type="match status" value="1"/>
</dbReference>
<organism>
    <name type="scientific">Homo sapiens</name>
    <name type="common">Human</name>
    <dbReference type="NCBI Taxonomy" id="9606"/>
    <lineage>
        <taxon>Eukaryota</taxon>
        <taxon>Metazoa</taxon>
        <taxon>Chordata</taxon>
        <taxon>Craniata</taxon>
        <taxon>Vertebrata</taxon>
        <taxon>Euteleostomi</taxon>
        <taxon>Mammalia</taxon>
        <taxon>Eutheria</taxon>
        <taxon>Euarchontoglires</taxon>
        <taxon>Primates</taxon>
        <taxon>Haplorrhini</taxon>
        <taxon>Catarrhini</taxon>
        <taxon>Hominidae</taxon>
        <taxon>Homo</taxon>
    </lineage>
</organism>
<name>MTG16_HUMAN</name>
<keyword id="KW-0002">3D-structure</keyword>
<keyword id="KW-0025">Alternative splicing</keyword>
<keyword id="KW-0160">Chromosomal rearrangement</keyword>
<keyword id="KW-0175">Coiled coil</keyword>
<keyword id="KW-0221">Differentiation</keyword>
<keyword id="KW-0333">Golgi apparatus</keyword>
<keyword id="KW-0472">Membrane</keyword>
<keyword id="KW-0479">Metal-binding</keyword>
<keyword id="KW-0539">Nucleus</keyword>
<keyword id="KW-0597">Phosphoprotein</keyword>
<keyword id="KW-1267">Proteomics identification</keyword>
<keyword id="KW-1185">Reference proteome</keyword>
<keyword id="KW-0678">Repressor</keyword>
<keyword id="KW-0804">Transcription</keyword>
<keyword id="KW-0805">Transcription regulation</keyword>
<keyword id="KW-0862">Zinc</keyword>
<keyword id="KW-0863">Zinc-finger</keyword>
<comment type="function">
    <text evidence="2 12 14 20 22 23 24 27 28">Transcriptional corepressor which facilitates transcriptional repression via its association with DNA-binding transcription factors and recruitment of other corepressors and histone-modifying enzymes (PubMed:12559562, PubMed:15203199). Can repress the expression of MMP7 in a ZBTB33-dependent manner (PubMed:23251453). Reduces the protein levels and stability of the transcriptinal regulator HIF1A; interacts with EGLN1 and promotes the HIF1A prolyl hydroxylation-dependent ubiquitination and proteasomal degradation pathway (PubMed:25974097). Contributes to inhibition of glycolysis and stimulation of mitochondrial respiration by down-regulating the expression of glycolytic genes including PFKFB3, PFKFB4, PDK1, PFKP, LDHA and HK1 which are direct targets of HIF1A (PubMed:23840896, PubMed:25974097). Regulates the proliferation and the differentiation of erythroid progenitors by repressing the expression of TAL1 target genes (By similarity). Plays a role in granulocyte differentiation (PubMed:15231665).</text>
</comment>
<comment type="function">
    <text evidence="11">Isoform 2 functions as an A-kinase-anchoring protein (PubMed:11823486).</text>
</comment>
<comment type="subunit">
    <text evidence="2 3 10 11 13 14 15 17 18 20 21 22 24">Homooligomer. Homotetramerization is mediated by nervy homology region 2 (NRH2) (By similarity). Can interact with RUNX1T1 and CBFA2T2; heterotetramerization between members of the CBFA2T family is proposed (PubMed:12242670). Component of a TAL-1 complex composed at least of CBFA2T3, LDB1, TAL1 and TCF3 (By similarity). Interacts with ERBB4, HDAC1, HDAC2, HDAC3, HDAC6, HDAC8, NCOR1, NCOR2, and ZNF652. According to PubMed:12242670, may not interact with HDAC6. Interacts with PLXNA1, PLXNA3 and PRKAR1A. Isoform 2 interacts with PRKAR2A, PDE7A and probably PDE4A. Interacts with ZBTB4, ZBTB38 and ZBTB33. Interacts with HIF1A and EGLN1. Interacts with the AML1-MTG8/ETO fusion protein.</text>
</comment>
<comment type="interaction">
    <interactant intactId="EBI-1190217">
        <id>O75081</id>
    </interactant>
    <interactant intactId="EBI-7135904">
        <id>P51805</id>
        <label>PLXNA3</label>
    </interactant>
    <organismsDiffer>false</organismsDiffer>
    <experiments>2</experiments>
</comment>
<comment type="interaction">
    <interactant intactId="EBI-1190217">
        <id>O75081</id>
    </interactant>
    <interactant intactId="EBI-1190229">
        <id>Q9Y2D9</id>
        <label>ZNF652</label>
    </interactant>
    <organismsDiffer>false</organismsDiffer>
    <experiments>2</experiments>
</comment>
<comment type="subcellular location">
    <molecule>Isoform 1</molecule>
    <subcellularLocation>
        <location>Nucleus</location>
        <location>Nucleolus</location>
    </subcellularLocation>
    <text>The RUNX1-CBFA2T3 fusion protein localizes to the nucleoplasm.</text>
</comment>
<comment type="subcellular location">
    <molecule>Isoform 2</molecule>
    <subcellularLocation>
        <location evidence="11">Nucleus</location>
        <location evidence="11">Nucleoplasm</location>
    </subcellularLocation>
    <subcellularLocation>
        <location evidence="11">Golgi apparatus membrane</location>
    </subcellularLocation>
</comment>
<comment type="alternative products">
    <event type="alternative splicing"/>
    <isoform>
        <id>O75081-1</id>
        <name>1</name>
        <name>CBFA2T3A</name>
        <name>MTG16a</name>
        <sequence type="displayed"/>
    </isoform>
    <isoform>
        <id>O75081-2</id>
        <name>2</name>
        <name>CBFA2T3B</name>
        <name>MTG16b</name>
        <sequence type="described" ref="VSP_028620 VSP_028624"/>
    </isoform>
    <isoform>
        <id>O75081-4</id>
        <name>3</name>
        <name>MTG16c</name>
        <sequence type="described" ref="VSP_028621"/>
    </isoform>
    <isoform>
        <id>O75081-5</id>
        <name>4</name>
        <name>MTG16HEL</name>
        <sequence type="described" ref="VSP_028622 VSP_028623"/>
    </isoform>
</comment>
<comment type="tissue specificity">
    <text evidence="14 25 26">Widely expressed with higher expression in heart, pancreas, skeletal muscle, spleen, thymus and peripheral blood leukocytes. Expressed in hematopoietic cells (at protein level).</text>
</comment>
<comment type="induction">
    <text evidence="16">Down-regulated by all-trans retinoic acid (ATRA).</text>
</comment>
<comment type="domain">
    <text evidence="3">Nervy homology region 2 (NHR2) mediates homo- and possibly heterotypic oligomerization by forming a four-helix bundle tetrameric structure.</text>
</comment>
<comment type="disease">
    <text evidence="8 9 25">A chromosomal aberration involving CBFA2T3 is found in therapy-related myeloid malignancies. Translocation t(16;21)(q24;q22) that forms a RUNX1-CBFA2T3 fusion protein.</text>
</comment>
<comment type="similarity">
    <text evidence="30">Belongs to the CBFA2T family.</text>
</comment>
<comment type="sequence caution" evidence="30">
    <conflict type="miscellaneous discrepancy">
        <sequence resource="EMBL-CDS" id="AAH62624"/>
    </conflict>
    <text>Aberrant splicing.</text>
</comment>
<comment type="sequence caution" evidence="30">
    <conflict type="erroneous gene model prediction">
        <sequence resource="EMBL-CDS" id="BAA31276"/>
    </conflict>
</comment>
<comment type="sequence caution" evidence="30">
    <conflict type="erroneous gene model prediction">
        <sequence resource="EMBL-CDS" id="BAA31277"/>
    </conflict>
</comment>
<comment type="online information" name="Atlas of Genetics and Cytogenetics in Oncology and Haematology">
    <link uri="https://atlasgeneticsoncology.org/gene/428/CBFA2T3"/>
</comment>
<accession>O75081</accession>
<accession>D3DX78</accession>
<accession>O60615</accession>
<accession>O60616</accession>
<accession>O60617</accession>
<accession>O75082</accession>
<accession>O75107</accession>
<accession>O75108</accession>
<accession>Q0P5Z6</accession>
<accession>Q6P5W6</accession>
<reference key="1">
    <citation type="journal article" date="1998" name="Blood">
        <title>The partner gene of AML1 in t(16;21) myeloid malignancies is a novel member of the MTG8(ETO) family.</title>
        <authorList>
            <person name="Gamou T."/>
            <person name="Kitamura E."/>
            <person name="Hosoda F."/>
            <person name="Shimuzu K."/>
            <person name="Hayashi Y."/>
            <person name="Nagase T."/>
            <person name="Yokoyama Y."/>
            <person name="Ohki M."/>
        </authorList>
    </citation>
    <scope>NUCLEOTIDE SEQUENCE [GENOMIC DNA / MRNA] (ISOFORMS 1 AND 2)</scope>
    <scope>CHROMOSOMAL TRANSLOCATION WITH RUNX1</scope>
    <scope>TISSUE SPECIFICITY</scope>
    <scope>VARIANT GLY-429</scope>
    <source>
        <tissue>Brain</tissue>
    </source>
</reference>
<reference key="2">
    <citation type="submission" date="2005-09" db="EMBL/GenBank/DDBJ databases">
        <authorList>
            <person name="Mural R.J."/>
            <person name="Istrail S."/>
            <person name="Sutton G.G."/>
            <person name="Florea L."/>
            <person name="Halpern A.L."/>
            <person name="Mobarry C.M."/>
            <person name="Lippert R."/>
            <person name="Walenz B."/>
            <person name="Shatkay H."/>
            <person name="Dew I."/>
            <person name="Miller J.R."/>
            <person name="Flanigan M.J."/>
            <person name="Edwards N.J."/>
            <person name="Bolanos R."/>
            <person name="Fasulo D."/>
            <person name="Halldorsson B.V."/>
            <person name="Hannenhalli S."/>
            <person name="Turner R."/>
            <person name="Yooseph S."/>
            <person name="Lu F."/>
            <person name="Nusskern D.R."/>
            <person name="Shue B.C."/>
            <person name="Zheng X.H."/>
            <person name="Zhong F."/>
            <person name="Delcher A.L."/>
            <person name="Huson D.H."/>
            <person name="Kravitz S.A."/>
            <person name="Mouchard L."/>
            <person name="Reinert K."/>
            <person name="Remington K.A."/>
            <person name="Clark A.G."/>
            <person name="Waterman M.S."/>
            <person name="Eichler E.E."/>
            <person name="Adams M.D."/>
            <person name="Hunkapiller M.W."/>
            <person name="Myers E.W."/>
            <person name="Venter J.C."/>
        </authorList>
    </citation>
    <scope>NUCLEOTIDE SEQUENCE [LARGE SCALE GENOMIC DNA]</scope>
</reference>
<reference key="3">
    <citation type="journal article" date="2004" name="Genome Res.">
        <title>The status, quality, and expansion of the NIH full-length cDNA project: the Mammalian Gene Collection (MGC).</title>
        <authorList>
            <consortium name="The MGC Project Team"/>
        </authorList>
    </citation>
    <scope>NUCLEOTIDE SEQUENCE [LARGE SCALE MRNA] (ISOFORM 1)</scope>
    <source>
        <tissue>Lung</tissue>
        <tissue>Pancreas</tissue>
    </source>
</reference>
<reference key="4">
    <citation type="journal article" date="1998" name="Genomics">
        <title>CBFA2T1, a gene rearranged in human leukemia, is a member of a multigene family.</title>
        <authorList>
            <person name="Calabi F."/>
            <person name="Cilli V."/>
        </authorList>
    </citation>
    <scope>NUCLEOTIDE SEQUENCE [GENOMIC DNA] OF 128-297 AND 492-604</scope>
    <scope>NUCLEOTIDE SEQUENCE [MRNA] OF 341-431</scope>
    <scope>TISSUE SPECIFICITY</scope>
    <source>
        <tissue>Brain</tissue>
    </source>
</reference>
<reference key="5">
    <citation type="journal article" date="2000" name="Leukemia">
        <title>AML1-MTG16 fusion gene in therapy-related acute leukemia with t(16;21)(q24;q22): two new cases.</title>
        <authorList>
            <person name="Salomon-Nguyen F."/>
            <person name="Busson-Le Coniat M."/>
            <person name="Lafage Pochitaloff M."/>
            <person name="Mozziconacci J."/>
            <person name="Berger R."/>
            <person name="Bernard O.A."/>
        </authorList>
    </citation>
    <scope>CHROMOSOMAL TRANSLOCATION WITH RUNX1</scope>
</reference>
<reference key="6">
    <citation type="journal article" date="2001" name="Haematologica">
        <title>AML1/MTG16 fusion gene from a t(16;21)(q24;q22) translocation in treatment-induced leukemia after breast cancer.</title>
        <authorList>
            <person name="La Starza R."/>
            <person name="Sambani C."/>
            <person name="Crescenzi B."/>
            <person name="Matteucci C."/>
            <person name="Martelli M.F."/>
            <person name="Mecucci C."/>
        </authorList>
    </citation>
    <scope>CHROMOSOMAL TRANSLOCATION WITH RUNX1</scope>
</reference>
<reference key="7">
    <citation type="journal article" date="2001" name="Mol. Cell. Biol.">
        <title>ETO, a target of t(8;21) in acute leukemia, makes distinct contacts with multiple histone deacetylases and binds mSin3A through its oligomerization domain.</title>
        <authorList>
            <person name="Amann J.M."/>
            <person name="Nip J."/>
            <person name="Strom D.K."/>
            <person name="Lutterbach B."/>
            <person name="Harada H."/>
            <person name="Lenny N."/>
            <person name="Downing J.R."/>
            <person name="Meyers S."/>
            <person name="Hiebert S.W."/>
        </authorList>
    </citation>
    <scope>INTERACTION WITH HDAC1; HDAC2; HDAC3; HDAC6; HDAC8; NCOR1 AND NCOR2</scope>
</reference>
<reference key="8">
    <citation type="journal article" date="2002" name="Cancer Res.">
        <title>CBFA2T3 (MTG16) is a putative breast tumor suppressor gene from the breast cancer loss of heterozygosity region at 16q24.3.</title>
        <authorList>
            <person name="Kochetkova M."/>
            <person name="McKenzie O.L.D."/>
            <person name="Bais A.J."/>
            <person name="Martin J.M."/>
            <person name="Secker G.A."/>
            <person name="Seshadri R."/>
            <person name="Powell J.A."/>
            <person name="Hinze S.J."/>
            <person name="Gardner A.E."/>
            <person name="Spendlove H.E."/>
            <person name="O'Callaghan N.J."/>
            <person name="Cleton-Jansen A.-M."/>
            <person name="Cornelisse C."/>
            <person name="Whitmore S.A."/>
            <person name="Crawford J."/>
            <person name="Kremmidiotis G."/>
            <person name="Sutherland G.R."/>
            <person name="Callen D.F."/>
        </authorList>
    </citation>
    <scope>FUNCTION</scope>
</reference>
<reference key="9">
    <citation type="journal article" date="2002" name="J. Immunol.">
        <title>Identification and characterization of myeloid translocation gene 16b as a novel a kinase anchoring protein in T lymphocytes.</title>
        <authorList>
            <person name="Schillace R.V."/>
            <person name="Andrews S.F."/>
            <person name="Liberty G.A."/>
            <person name="Davey M.P."/>
            <person name="Carr D.W."/>
        </authorList>
    </citation>
    <scope>FUNCTION (ISOFORM 2)</scope>
    <scope>INTERACTION WITH PRKAR2A</scope>
    <scope>MUTAGENESIS OF VAL-494</scope>
    <scope>SUBCELLULAR LOCATION (ISOFORM 2)</scope>
</reference>
<reference key="10">
    <citation type="journal article" date="2002" name="Oncogene">
        <title>The transcriptional corepressor MTG16a contains a novel nucleolar targeting sequence deranged in t(16; 21)-positive myeloid malignancies.</title>
        <authorList>
            <person name="Hoogeveen A.T."/>
            <person name="Rossetti S."/>
            <person name="Stoyanova V."/>
            <person name="Schonkeren J."/>
            <person name="Fenaroli A."/>
            <person name="Schiaffonati L."/>
            <person name="van Unen L."/>
            <person name="Sacchi N."/>
        </authorList>
    </citation>
    <scope>ALTERNATIVE SPLICING (ISOFORMS 3 AND 4)</scope>
    <scope>SUBCELLULAR LOCATION</scope>
    <scope>INTERACTION WITH CBFA2T2; HDAC1; HDAC3 AND RUNX1T1</scope>
</reference>
<reference key="11">
    <citation type="journal article" date="2003" name="Gene">
        <title>The ETO (MTG8) gene family.</title>
        <authorList>
            <person name="Davis J.N."/>
            <person name="McGhee L."/>
            <person name="Meyers S."/>
        </authorList>
    </citation>
    <scope>REVIEW</scope>
</reference>
<reference key="12">
    <citation type="journal article" date="2004" name="Cancer Res.">
        <title>AML1-ETO decreases ETO-2 (MTG16) interactions with nuclear receptor corepressor, an effect that impairs granulocyte differentiation.</title>
        <authorList>
            <person name="Ibanez V."/>
            <person name="Sharma A."/>
            <person name="Buonamici S."/>
            <person name="Verma A."/>
            <person name="Kalakonda S."/>
            <person name="Wang J."/>
            <person name="Kadkol S."/>
            <person name="Saunthararajah Y."/>
        </authorList>
    </citation>
    <scope>FUNCTION</scope>
    <scope>INTERACTION WITH NCOR1</scope>
    <scope>TISSUE SPECIFICITY</scope>
</reference>
<reference key="13">
    <citation type="journal article" date="2004" name="Genomics">
        <title>The MTG proteins: chromatin repression players with a passion for networking.</title>
        <authorList>
            <person name="Rossetti S."/>
            <person name="Hoogeveen A.T."/>
            <person name="Sacchi N."/>
        </authorList>
    </citation>
    <scope>REVIEW</scope>
</reference>
<reference key="14">
    <citation type="journal article" date="2004" name="J. Immunol.">
        <title>A-kinase anchoring proteins interact with phosphodiesterases in T lymphocyte cell lines.</title>
        <authorList>
            <person name="Asirvatham A.L."/>
            <person name="Galligan S.G."/>
            <person name="Schillace R.V."/>
            <person name="Davey M.P."/>
            <person name="Vasta V."/>
            <person name="Beavo J.A."/>
            <person name="Carr D.W."/>
        </authorList>
    </citation>
    <scope>INTERACTION WITH PDE4A AND PDE7A</scope>
</reference>
<reference key="15">
    <citation type="journal article" date="2005" name="Exp. Hematol.">
        <title>The leukemia-associated ETO homologues are differently expressed during hematopoietic differentiation.</title>
        <authorList>
            <person name="Lindberg S.R."/>
            <person name="Olsson A."/>
            <person name="Persson A.-M."/>
            <person name="Olsson I."/>
        </authorList>
    </citation>
    <scope>INDUCTION</scope>
</reference>
<reference key="16">
    <citation type="journal article" date="2006" name="Cancer Cell">
        <title>The tetramer structure of the Nervy homology two domain, NHR2, is critical for AML1/ETO's activity.</title>
        <authorList>
            <person name="Liu Y."/>
            <person name="Cheney M.D."/>
            <person name="Gaudet J.J."/>
            <person name="Chruszcz M."/>
            <person name="Lukasik S.M."/>
            <person name="Sugiyama D."/>
            <person name="Lary J."/>
            <person name="Cole J."/>
            <person name="Dauter Z."/>
            <person name="Minor W."/>
            <person name="Speck N.A."/>
            <person name="Bushweller J.H."/>
        </authorList>
    </citation>
    <scope>INTERACTION WITH AML1-MTG8/ETO</scope>
</reference>
<reference key="17">
    <citation type="journal article" date="2006" name="J. Biol. Chem.">
        <title>ErbB-4 s80 intracellular domain abrogates ETO2-dependent transcriptional repression.</title>
        <authorList>
            <person name="Linggi B."/>
            <person name="Carpenter G."/>
        </authorList>
    </citation>
    <scope>INTERACTION WITH ERBB4</scope>
</reference>
<reference key="18">
    <citation type="journal article" date="2006" name="Mol. Cancer Res.">
        <title>ZNF652, a novel zinc finger protein, interacts with the putative breast tumor suppressor CBFA2T3 to repress transcription.</title>
        <authorList>
            <person name="Kumar R."/>
            <person name="Manning J."/>
            <person name="Spendlove H.E."/>
            <person name="Kremmidiotis G."/>
            <person name="McKirdy R."/>
            <person name="Lee J."/>
            <person name="Millband D.N."/>
            <person name="Cheney K.M."/>
            <person name="Stampfer M.R."/>
            <person name="Dwivedi P.P."/>
            <person name="Morris H.A."/>
            <person name="Callen D.F."/>
        </authorList>
    </citation>
    <scope>FUNCTION</scope>
    <scope>INTERACTION WITH ZNF652</scope>
</reference>
<reference key="19">
    <citation type="journal article" date="2009" name="Sci. Signal.">
        <title>Quantitative phosphoproteomic analysis of T cell receptor signaling reveals system-wide modulation of protein-protein interactions.</title>
        <authorList>
            <person name="Mayya V."/>
            <person name="Lundgren D.H."/>
            <person name="Hwang S.-I."/>
            <person name="Rezaul K."/>
            <person name="Wu L."/>
            <person name="Eng J.K."/>
            <person name="Rodionov V."/>
            <person name="Han D.K."/>
        </authorList>
    </citation>
    <scope>IDENTIFICATION BY MASS SPECTROMETRY [LARGE SCALE ANALYSIS]</scope>
    <source>
        <tissue>Leukemic T-cell</tissue>
    </source>
</reference>
<reference key="20">
    <citation type="journal article" date="2010" name="FEBS Lett.">
        <title>Myeloid translocation gene 16b is a dual A-kinase anchoring protein that interacts selectively with plexins in a phospho-regulated manner.</title>
        <authorList>
            <person name="Fiedler S.E."/>
            <person name="Schillace R.V."/>
            <person name="Daniels C.J."/>
            <person name="Andrews S.F."/>
            <person name="Carr D.W."/>
        </authorList>
    </citation>
    <scope>INTERACTION WITH PLXNA1; PLXNA3 AND PRKAR1A</scope>
</reference>
<reference key="21">
    <citation type="journal article" date="2012" name="PLoS ONE">
        <title>Kaiso directs the transcriptional corepressor MTG16 to the Kaiso binding site in target promoters.</title>
        <authorList>
            <person name="Barrett C.W."/>
            <person name="Smith J.J."/>
            <person name="Lu L.C."/>
            <person name="Markham N."/>
            <person name="Stengel K.R."/>
            <person name="Short S.P."/>
            <person name="Zhang B."/>
            <person name="Hunt A.A."/>
            <person name="Fingleton B.M."/>
            <person name="Carnahan R.H."/>
            <person name="Engel M.E."/>
            <person name="Chen X."/>
            <person name="Beauchamp R.D."/>
            <person name="Wilson K.T."/>
            <person name="Hiebert S.W."/>
            <person name="Reynolds A.B."/>
            <person name="Williams C.S."/>
        </authorList>
    </citation>
    <scope>FUNCTION</scope>
    <scope>INTERACTION WITH ZBTB4; ZBTB33 AND ZBTB38</scope>
</reference>
<reference key="22">
    <citation type="journal article" date="2013" name="J. Proteome Res.">
        <title>Toward a comprehensive characterization of a human cancer cell phosphoproteome.</title>
        <authorList>
            <person name="Zhou H."/>
            <person name="Di Palma S."/>
            <person name="Preisinger C."/>
            <person name="Peng M."/>
            <person name="Polat A.N."/>
            <person name="Heck A.J."/>
            <person name="Mohammed S."/>
        </authorList>
    </citation>
    <scope>PHOSPHORYLATION [LARGE SCALE ANALYSIS] AT SER-457; SER-459 AND THR-479</scope>
    <scope>IDENTIFICATION BY MASS SPECTROMETRY [LARGE SCALE ANALYSIS]</scope>
    <source>
        <tissue>Erythroleukemia</tissue>
    </source>
</reference>
<reference key="23">
    <citation type="journal article" date="2013" name="PLoS ONE">
        <title>The transcriptional co-repressor myeloid translocation gene 16 inhibits glycolysis and stimulates mitochondrial respiration.</title>
        <authorList>
            <person name="Kumar P."/>
            <person name="Sharoyko V.V."/>
            <person name="Spegel P."/>
            <person name="Gullberg U."/>
            <person name="Mulder H."/>
            <person name="Olsson I."/>
            <person name="Ajore R."/>
        </authorList>
    </citation>
    <scope>FUNCTION</scope>
    <scope>REGIONS NHR2 AND NHR3</scope>
</reference>
<reference key="24">
    <citation type="journal article" date="2014" name="J. Proteomics">
        <title>An enzyme assisted RP-RPLC approach for in-depth analysis of human liver phosphoproteome.</title>
        <authorList>
            <person name="Bian Y."/>
            <person name="Song C."/>
            <person name="Cheng K."/>
            <person name="Dong M."/>
            <person name="Wang F."/>
            <person name="Huang J."/>
            <person name="Sun D."/>
            <person name="Wang L."/>
            <person name="Ye M."/>
            <person name="Zou H."/>
        </authorList>
    </citation>
    <scope>PHOSPHORYLATION [LARGE SCALE ANALYSIS] AT SER-637; SER-641 AND THR-650</scope>
    <scope>IDENTIFICATION BY MASS SPECTROMETRY [LARGE SCALE ANALYSIS]</scope>
    <source>
        <tissue>Liver</tissue>
    </source>
</reference>
<reference key="25">
    <citation type="journal article" date="2015" name="PLoS ONE">
        <title>Myeloid translocation gene-16 co-repressor promotes degradation of hypoxia-inducible factor 1.</title>
        <authorList>
            <person name="Kumar P."/>
            <person name="Gullberg U."/>
            <person name="Olsson I."/>
            <person name="Ajore R."/>
        </authorList>
    </citation>
    <scope>FUNCTION</scope>
    <scope>INTERACTION WITH HIF1A AND EGLN1</scope>
</reference>
<reference key="26">
    <citation type="journal article" date="2006" name="Science">
        <title>The consensus coding sequences of human breast and colorectal cancers.</title>
        <authorList>
            <person name="Sjoeblom T."/>
            <person name="Jones S."/>
            <person name="Wood L.D."/>
            <person name="Parsons D.W."/>
            <person name="Lin J."/>
            <person name="Barber T.D."/>
            <person name="Mandelker D."/>
            <person name="Leary R.J."/>
            <person name="Ptak J."/>
            <person name="Silliman N."/>
            <person name="Szabo S."/>
            <person name="Buckhaults P."/>
            <person name="Farrell C."/>
            <person name="Meeh P."/>
            <person name="Markowitz S.D."/>
            <person name="Willis J."/>
            <person name="Dawson D."/>
            <person name="Willson J.K.V."/>
            <person name="Gazdar A.F."/>
            <person name="Hartigan J."/>
            <person name="Wu L."/>
            <person name="Liu C."/>
            <person name="Parmigiani G."/>
            <person name="Park B.H."/>
            <person name="Bachman K.E."/>
            <person name="Papadopoulos N."/>
            <person name="Vogelstein B."/>
            <person name="Kinzler K.W."/>
            <person name="Velculescu V.E."/>
        </authorList>
    </citation>
    <scope>VARIANTS [LARGE SCALE ANALYSIS] HIS-306; LYS-518 AND VAL-534</scope>
</reference>
<gene>
    <name type="primary">CBFA2T3</name>
    <name type="synonym">MTG16</name>
    <name type="synonym">MTGR2</name>
    <name type="synonym">ZMYND4</name>
</gene>
<sequence>MPASRLRDRAASSASGSTCGSMSQTHPVLESGLLASAGCSAPRGPRKGGPAPVDRKAKASAMPDSPAEVKTQPRSTPPSMPPPPPAASQGATRPPSFTPHTHREDGPATLPHGRFHGCLKWSMVCLLMNGSSHSPTAINGAPCTPNGFSNGPATSSTASLSTQHLPPACGARQLSKLKRFLTTLQQFGSDISPEIGERVRTLVLGLVNSTLTIEEFHSKLQEATNFPLRPFVIPFLKANLPLLQRELLHCARLAKQTPAQYLAQHEQLLLDASASSPIDSSELLLEVNENGKRRTPDRTKENGSDRDPLHPEHLSKRPCTLNPAQRYSPSNGPPQPTPPPHYRLEDIAMAHHFRDAYRHPDPRELRERHRPLVVPGSRQEEVIDHKLTEREWAEEWKHLNNLLNCIMDMVEKTRRSLTVLRRCQEADREELNHWARRYSDAEDTKKGPAPAAARPRSSSAGPEGPQLDVPREFLPRTLTGYVPEDIWRKAEEAVNEVKRQAMSELQKAVSDAERKAHELITTERAKMERALAEAKRQASEDALTVINQQEDSSESCWNCGRKASETCSGCNAARYCGSFCQHRDWEKHHHVCGQSLQGPTAVVADPVPGPPEAAHSLGPSLPVGAASPSEAGSAGPSRPGSPSPPGPLDTVPR</sequence>
<protein>
    <recommendedName>
        <fullName>Protein CBFA2T3</fullName>
    </recommendedName>
    <alternativeName>
        <fullName>MTG8-related protein 2</fullName>
    </alternativeName>
    <alternativeName>
        <fullName>Myeloid translocation gene on chromosome 16 protein</fullName>
        <shortName>hMTG16</shortName>
    </alternativeName>
    <alternativeName>
        <fullName>Zinc finger MYND domain-containing protein 4</fullName>
    </alternativeName>
</protein>
<proteinExistence type="evidence at protein level"/>
<feature type="chain" id="PRO_0000307173" description="Protein CBFA2T3">
    <location>
        <begin position="1"/>
        <end position="653"/>
    </location>
</feature>
<feature type="domain" description="TAFH" evidence="6">
    <location>
        <begin position="171"/>
        <end position="266"/>
    </location>
</feature>
<feature type="zinc finger region" description="MYND-type" evidence="5">
    <location>
        <begin position="556"/>
        <end position="592"/>
    </location>
</feature>
<feature type="region of interest" description="Mediates localization to the nucleus" evidence="1">
    <location>
        <begin position="1"/>
        <end position="435"/>
    </location>
</feature>
<feature type="region of interest" description="Mediates interaction with PDE7A (in isoform 2)">
    <location>
        <begin position="1"/>
        <end position="430"/>
    </location>
</feature>
<feature type="region of interest" description="Required for nucleolar targeting (in isoform 1)">
    <location>
        <begin position="1"/>
        <end position="127"/>
    </location>
</feature>
<feature type="region of interest" description="Disordered" evidence="7">
    <location>
        <begin position="1"/>
        <end position="109"/>
    </location>
</feature>
<feature type="region of interest" description="Interaction with ZBTB33" evidence="22">
    <location>
        <begin position="145"/>
        <end position="242"/>
    </location>
</feature>
<feature type="region of interest" description="Interaction with HIF1A" evidence="24">
    <location>
        <begin position="176"/>
        <end position="268"/>
    </location>
</feature>
<feature type="region of interest" description="Disordered" evidence="7">
    <location>
        <begin position="284"/>
        <end position="342"/>
    </location>
</feature>
<feature type="region of interest" description="Nervy homology region 2 (NHR2); essential for down-regulation of PFKFB3, PFKFB4 and PDK1 expression" evidence="23">
    <location>
        <begin position="394"/>
        <end position="412"/>
    </location>
</feature>
<feature type="region of interest" description="Disordered" evidence="7">
    <location>
        <begin position="434"/>
        <end position="472"/>
    </location>
</feature>
<feature type="region of interest" description="Nervy homology region 3 (NHR3); essential for down-regulation of PFKFB3, PFKFB4 and PDK1 expression" evidence="23">
    <location>
        <begin position="485"/>
        <end position="533"/>
    </location>
</feature>
<feature type="region of interest" description="Mediates interaction with PRKAR2A" evidence="11">
    <location>
        <begin position="485"/>
        <end position="506"/>
    </location>
</feature>
<feature type="region of interest" description="Disordered" evidence="7">
    <location>
        <begin position="603"/>
        <end position="653"/>
    </location>
</feature>
<feature type="coiled-coil region" evidence="4">
    <location>
        <begin position="488"/>
        <end position="543"/>
    </location>
</feature>
<feature type="compositionally biased region" description="Basic and acidic residues" evidence="7">
    <location>
        <begin position="1"/>
        <end position="10"/>
    </location>
</feature>
<feature type="compositionally biased region" description="Low complexity" evidence="7">
    <location>
        <begin position="11"/>
        <end position="23"/>
    </location>
</feature>
<feature type="compositionally biased region" description="Pro residues" evidence="7">
    <location>
        <begin position="75"/>
        <end position="86"/>
    </location>
</feature>
<feature type="compositionally biased region" description="Basic and acidic residues" evidence="7">
    <location>
        <begin position="289"/>
        <end position="315"/>
    </location>
</feature>
<feature type="compositionally biased region" description="Pro residues" evidence="7">
    <location>
        <begin position="331"/>
        <end position="341"/>
    </location>
</feature>
<feature type="compositionally biased region" description="Basic and acidic residues" evidence="7">
    <location>
        <begin position="434"/>
        <end position="446"/>
    </location>
</feature>
<feature type="compositionally biased region" description="Low complexity" evidence="7">
    <location>
        <begin position="447"/>
        <end position="462"/>
    </location>
</feature>
<feature type="compositionally biased region" description="Low complexity" evidence="7">
    <location>
        <begin position="622"/>
        <end position="638"/>
    </location>
</feature>
<feature type="binding site" evidence="5">
    <location>
        <position position="556"/>
    </location>
    <ligand>
        <name>Zn(2+)</name>
        <dbReference type="ChEBI" id="CHEBI:29105"/>
        <label>1</label>
    </ligand>
</feature>
<feature type="binding site" evidence="5">
    <location>
        <position position="559"/>
    </location>
    <ligand>
        <name>Zn(2+)</name>
        <dbReference type="ChEBI" id="CHEBI:29105"/>
        <label>1</label>
    </ligand>
</feature>
<feature type="binding site" evidence="5">
    <location>
        <position position="567"/>
    </location>
    <ligand>
        <name>Zn(2+)</name>
        <dbReference type="ChEBI" id="CHEBI:29105"/>
        <label>2</label>
    </ligand>
</feature>
<feature type="binding site" evidence="5">
    <location>
        <position position="570"/>
    </location>
    <ligand>
        <name>Zn(2+)</name>
        <dbReference type="ChEBI" id="CHEBI:29105"/>
        <label>2</label>
    </ligand>
</feature>
<feature type="binding site" evidence="5">
    <location>
        <position position="576"/>
    </location>
    <ligand>
        <name>Zn(2+)</name>
        <dbReference type="ChEBI" id="CHEBI:29105"/>
        <label>1</label>
    </ligand>
</feature>
<feature type="binding site" evidence="5">
    <location>
        <position position="580"/>
    </location>
    <ligand>
        <name>Zn(2+)</name>
        <dbReference type="ChEBI" id="CHEBI:29105"/>
        <label>1</label>
    </ligand>
</feature>
<feature type="binding site" evidence="5">
    <location>
        <position position="588"/>
    </location>
    <ligand>
        <name>Zn(2+)</name>
        <dbReference type="ChEBI" id="CHEBI:29105"/>
        <label>2</label>
    </ligand>
</feature>
<feature type="binding site" evidence="5">
    <location>
        <position position="592"/>
    </location>
    <ligand>
        <name>Zn(2+)</name>
        <dbReference type="ChEBI" id="CHEBI:29105"/>
        <label>2</label>
    </ligand>
</feature>
<feature type="site" description="Breakpoint for translocation to form type-1 RUNX1-CBFA2T3 fusion protein">
    <location>
        <begin position="51"/>
        <end position="52"/>
    </location>
</feature>
<feature type="site" description="Breakpoint for translocation to form type-2 RUNX1-CBFA2T3 fusion protein">
    <location>
        <begin position="127"/>
        <end position="128"/>
    </location>
</feature>
<feature type="modified residue" description="Phosphoserine" evidence="31">
    <location>
        <position position="457"/>
    </location>
</feature>
<feature type="modified residue" description="Phosphoserine" evidence="31">
    <location>
        <position position="459"/>
    </location>
</feature>
<feature type="modified residue" description="Phosphothreonine" evidence="31">
    <location>
        <position position="479"/>
    </location>
</feature>
<feature type="modified residue" description="Phosphoserine" evidence="32">
    <location>
        <position position="637"/>
    </location>
</feature>
<feature type="modified residue" description="Phosphoserine" evidence="32">
    <location>
        <position position="641"/>
    </location>
</feature>
<feature type="modified residue" description="Phosphothreonine" evidence="32">
    <location>
        <position position="650"/>
    </location>
</feature>
<feature type="splice variant" id="VSP_028620" description="In isoform 2." evidence="29">
    <location>
        <begin position="1"/>
        <end position="61"/>
    </location>
</feature>
<feature type="splice variant" id="VSP_028621" description="In isoform 3." evidence="30">
    <original>APVDRKAKASAMPDSPAEVKTQPRSTPPSMPPPPPAASQGATRPPSFTPHTHREDGPATLPHGRFHGCLKWSMVCLL</original>
    <variation>V</variation>
    <location>
        <begin position="51"/>
        <end position="127"/>
    </location>
</feature>
<feature type="splice variant" id="VSP_028622" description="In isoform 4." evidence="30">
    <original>A</original>
    <variation>GKPALAAAGAPALCTPGQADARPVLGPA</variation>
    <location>
        <position position="51"/>
    </location>
</feature>
<feature type="splice variant" id="VSP_028623" description="In isoform 4." evidence="30">
    <location>
        <begin position="52"/>
        <end position="653"/>
    </location>
</feature>
<feature type="splice variant" id="VSP_028624" description="In isoform 2." evidence="29">
    <location>
        <begin position="102"/>
        <end position="126"/>
    </location>
</feature>
<feature type="sequence variant" id="VAR_035447" description="In a colorectal cancer sample; somatic mutation; dbSNP:rs745972870." evidence="19">
    <original>R</original>
    <variation>H</variation>
    <location>
        <position position="306"/>
    </location>
</feature>
<feature type="sequence variant" id="VAR_035374" description="In dbSNP:rs1053526." evidence="25">
    <original>E</original>
    <variation>G</variation>
    <location>
        <position position="429"/>
    </location>
</feature>
<feature type="sequence variant" id="VAR_035448" description="In a colorectal cancer sample; somatic mutation; dbSNP:rs774310781." evidence="19">
    <original>E</original>
    <variation>K</variation>
    <location>
        <position position="518"/>
    </location>
</feature>
<feature type="sequence variant" id="VAR_035449" description="In a colorectal cancer sample; somatic mutation; dbSNP:rs553618592." evidence="19">
    <original>A</original>
    <variation>V</variation>
    <location>
        <position position="534"/>
    </location>
</feature>
<feature type="mutagenesis site" description="Loss of interaction with PRKAR2A." evidence="11">
    <original>V</original>
    <variation>P</variation>
    <variation>A</variation>
    <location>
        <position position="494"/>
    </location>
</feature>
<feature type="sequence conflict" description="In Ref. 3; AAH47019." evidence="30" ref="3">
    <original>F</original>
    <variation>L</variation>
    <location>
        <position position="231"/>
    </location>
</feature>
<feature type="sequence conflict" description="In Ref. 4; AAC64702." evidence="30" ref="4">
    <original>T</original>
    <variation>S</variation>
    <location>
        <position position="295"/>
    </location>
</feature>
<feature type="sequence conflict" description="In Ref. 1; BAA29061." evidence="30" ref="1">
    <original>D</original>
    <variation>E</variation>
    <location>
        <position position="305"/>
    </location>
</feature>
<feature type="sequence conflict" description="In Ref. 4; AAC64698." evidence="30" ref="4">
    <original>R</original>
    <variation>P</variation>
    <location>
        <position position="370"/>
    </location>
</feature>
<feature type="sequence conflict" description="In Ref. 4; AAC64698." evidence="30" ref="4">
    <original>L</original>
    <variation>V</variation>
    <location>
        <position position="420"/>
    </location>
</feature>
<feature type="sequence conflict" description="In Ref. 4; AAC64701." evidence="30" ref="4">
    <original>A</original>
    <variation>D</variation>
    <location>
        <position position="542"/>
    </location>
</feature>